<sequence>MIDSEGFRPNVGIILANDDGQVLWAKRIGHNAWQFPQGGIQFGETPEQALFRELREEIGLLPEHVQIIAQTKGWLRYRLPHRYIRSDSDPVCIGQKQKWFLLKLTAPAKNIQLNLADPPEFDEWQWVSYWYPLGQVVNFKRDVYRKAMVELCTQLPVQQLP</sequence>
<reference key="1">
    <citation type="journal article" date="2008" name="Antimicrob. Agents Chemother.">
        <title>Whole-genome pyrosequencing of an epidemic multidrug-resistant Acinetobacter baumannii strain belonging to the European clone II group.</title>
        <authorList>
            <person name="Iacono M."/>
            <person name="Villa L."/>
            <person name="Fortini D."/>
            <person name="Bordoni R."/>
            <person name="Imperi F."/>
            <person name="Bonnal R.J."/>
            <person name="Sicheritz-Ponten T."/>
            <person name="De Bellis G."/>
            <person name="Visca P."/>
            <person name="Cassone A."/>
            <person name="Carattoli A."/>
        </authorList>
    </citation>
    <scope>NUCLEOTIDE SEQUENCE [LARGE SCALE GENOMIC DNA]</scope>
    <source>
        <strain>ACICU</strain>
    </source>
</reference>
<organism>
    <name type="scientific">Acinetobacter baumannii (strain ACICU)</name>
    <dbReference type="NCBI Taxonomy" id="405416"/>
    <lineage>
        <taxon>Bacteria</taxon>
        <taxon>Pseudomonadati</taxon>
        <taxon>Pseudomonadota</taxon>
        <taxon>Gammaproteobacteria</taxon>
        <taxon>Moraxellales</taxon>
        <taxon>Moraxellaceae</taxon>
        <taxon>Acinetobacter</taxon>
        <taxon>Acinetobacter calcoaceticus/baumannii complex</taxon>
    </lineage>
</organism>
<gene>
    <name evidence="1" type="primary">rppH</name>
    <name evidence="1" type="synonym">nudH</name>
    <name type="ordered locus">ACICU_00420</name>
</gene>
<dbReference type="EC" id="3.6.1.-" evidence="1"/>
<dbReference type="EMBL" id="CP000863">
    <property type="protein sequence ID" value="ACC55732.1"/>
    <property type="molecule type" value="Genomic_DNA"/>
</dbReference>
<dbReference type="RefSeq" id="WP_000567254.1">
    <property type="nucleotide sequence ID" value="NZ_CP031380.1"/>
</dbReference>
<dbReference type="SMR" id="B2I354"/>
<dbReference type="KEGG" id="abc:ACICU_00420"/>
<dbReference type="HOGENOM" id="CLU_087195_3_1_6"/>
<dbReference type="Proteomes" id="UP000008839">
    <property type="component" value="Chromosome"/>
</dbReference>
<dbReference type="GO" id="GO:0016462">
    <property type="term" value="F:pyrophosphatase activity"/>
    <property type="evidence" value="ECO:0007669"/>
    <property type="project" value="UniProtKB-ARBA"/>
</dbReference>
<dbReference type="CDD" id="cd03671">
    <property type="entry name" value="NUDIX_Ap4A_hydrolase_plant_like"/>
    <property type="match status" value="1"/>
</dbReference>
<dbReference type="FunFam" id="3.90.79.10:FF:000001">
    <property type="entry name" value="RNA pyrophosphohydrolase"/>
    <property type="match status" value="1"/>
</dbReference>
<dbReference type="Gene3D" id="3.90.79.10">
    <property type="entry name" value="Nucleoside Triphosphate Pyrophosphohydrolase"/>
    <property type="match status" value="1"/>
</dbReference>
<dbReference type="HAMAP" id="MF_00298">
    <property type="entry name" value="Nudix_RppH"/>
    <property type="match status" value="1"/>
</dbReference>
<dbReference type="InterPro" id="IPR020476">
    <property type="entry name" value="Nudix_hydrolase"/>
</dbReference>
<dbReference type="InterPro" id="IPR015797">
    <property type="entry name" value="NUDIX_hydrolase-like_dom_sf"/>
</dbReference>
<dbReference type="InterPro" id="IPR020084">
    <property type="entry name" value="NUDIX_hydrolase_CS"/>
</dbReference>
<dbReference type="InterPro" id="IPR000086">
    <property type="entry name" value="NUDIX_hydrolase_dom"/>
</dbReference>
<dbReference type="InterPro" id="IPR022927">
    <property type="entry name" value="RppH"/>
</dbReference>
<dbReference type="NCBIfam" id="NF001934">
    <property type="entry name" value="PRK00714.1-1"/>
    <property type="match status" value="1"/>
</dbReference>
<dbReference type="NCBIfam" id="NF001937">
    <property type="entry name" value="PRK00714.1-4"/>
    <property type="match status" value="1"/>
</dbReference>
<dbReference type="NCBIfam" id="NF001938">
    <property type="entry name" value="PRK00714.1-5"/>
    <property type="match status" value="1"/>
</dbReference>
<dbReference type="PANTHER" id="PTHR43736">
    <property type="entry name" value="ADP-RIBOSE PYROPHOSPHATASE"/>
    <property type="match status" value="1"/>
</dbReference>
<dbReference type="PANTHER" id="PTHR43736:SF1">
    <property type="entry name" value="DIHYDRONEOPTERIN TRIPHOSPHATE DIPHOSPHATASE"/>
    <property type="match status" value="1"/>
</dbReference>
<dbReference type="Pfam" id="PF00293">
    <property type="entry name" value="NUDIX"/>
    <property type="match status" value="1"/>
</dbReference>
<dbReference type="PRINTS" id="PR00502">
    <property type="entry name" value="NUDIXFAMILY"/>
</dbReference>
<dbReference type="SUPFAM" id="SSF55811">
    <property type="entry name" value="Nudix"/>
    <property type="match status" value="1"/>
</dbReference>
<dbReference type="PROSITE" id="PS51462">
    <property type="entry name" value="NUDIX"/>
    <property type="match status" value="1"/>
</dbReference>
<dbReference type="PROSITE" id="PS00893">
    <property type="entry name" value="NUDIX_BOX"/>
    <property type="match status" value="1"/>
</dbReference>
<evidence type="ECO:0000255" key="1">
    <source>
        <dbReference type="HAMAP-Rule" id="MF_00298"/>
    </source>
</evidence>
<feature type="chain" id="PRO_1000115258" description="RNA pyrophosphohydrolase">
    <location>
        <begin position="1"/>
        <end position="161"/>
    </location>
</feature>
<feature type="domain" description="Nudix hydrolase" evidence="1">
    <location>
        <begin position="6"/>
        <end position="149"/>
    </location>
</feature>
<feature type="short sequence motif" description="Nudix box">
    <location>
        <begin position="38"/>
        <end position="59"/>
    </location>
</feature>
<protein>
    <recommendedName>
        <fullName evidence="1">RNA pyrophosphohydrolase</fullName>
        <ecNumber evidence="1">3.6.1.-</ecNumber>
    </recommendedName>
    <alternativeName>
        <fullName evidence="1">(Di)nucleoside polyphosphate hydrolase</fullName>
    </alternativeName>
</protein>
<accession>B2I354</accession>
<name>RPPH_ACIBC</name>
<proteinExistence type="inferred from homology"/>
<comment type="function">
    <text evidence="1">Accelerates the degradation of transcripts by removing pyrophosphate from the 5'-end of triphosphorylated RNA, leading to a more labile monophosphorylated state that can stimulate subsequent ribonuclease cleavage.</text>
</comment>
<comment type="cofactor">
    <cofactor evidence="1">
        <name>a divalent metal cation</name>
        <dbReference type="ChEBI" id="CHEBI:60240"/>
    </cofactor>
</comment>
<comment type="similarity">
    <text evidence="1">Belongs to the Nudix hydrolase family. RppH subfamily.</text>
</comment>
<keyword id="KW-0378">Hydrolase</keyword>